<feature type="chain" id="PRO_0000238503" description="Polyadenylation factor subunit 2">
    <location>
        <begin position="1"/>
        <end position="612"/>
    </location>
</feature>
<feature type="repeat" description="WD 1">
    <location>
        <begin position="93"/>
        <end position="132"/>
    </location>
</feature>
<feature type="repeat" description="WD 2">
    <location>
        <begin position="135"/>
        <end position="175"/>
    </location>
</feature>
<feature type="repeat" description="WD 3">
    <location>
        <begin position="177"/>
        <end position="215"/>
    </location>
</feature>
<feature type="repeat" description="WD 4">
    <location>
        <begin position="218"/>
        <end position="257"/>
    </location>
</feature>
<feature type="repeat" description="WD 5">
    <location>
        <begin position="260"/>
        <end position="300"/>
    </location>
</feature>
<feature type="repeat" description="WD 6">
    <location>
        <begin position="303"/>
        <end position="345"/>
    </location>
</feature>
<feature type="repeat" description="WD 7">
    <location>
        <begin position="373"/>
        <end position="412"/>
    </location>
</feature>
<feature type="region of interest" description="Disordered" evidence="2">
    <location>
        <begin position="1"/>
        <end position="21"/>
    </location>
</feature>
<feature type="region of interest" description="Disordered" evidence="2">
    <location>
        <begin position="424"/>
        <end position="450"/>
    </location>
</feature>
<feature type="region of interest" description="Disordered" evidence="2">
    <location>
        <begin position="486"/>
        <end position="514"/>
    </location>
</feature>
<feature type="region of interest" description="Disordered" evidence="2">
    <location>
        <begin position="544"/>
        <end position="612"/>
    </location>
</feature>
<feature type="compositionally biased region" description="Basic and acidic residues" evidence="2">
    <location>
        <begin position="430"/>
        <end position="442"/>
    </location>
</feature>
<feature type="compositionally biased region" description="Pro residues" evidence="2">
    <location>
        <begin position="486"/>
        <end position="506"/>
    </location>
</feature>
<feature type="compositionally biased region" description="Pro residues" evidence="2">
    <location>
        <begin position="544"/>
        <end position="575"/>
    </location>
</feature>
<protein>
    <recommendedName>
        <fullName>Polyadenylation factor subunit 2</fullName>
    </recommendedName>
</protein>
<reference key="1">
    <citation type="journal article" date="2007" name="Science">
        <title>The Fusarium graminearum genome reveals a link between localized polymorphism and pathogen specialization.</title>
        <authorList>
            <person name="Cuomo C.A."/>
            <person name="Gueldener U."/>
            <person name="Xu J.-R."/>
            <person name="Trail F."/>
            <person name="Turgeon B.G."/>
            <person name="Di Pietro A."/>
            <person name="Walton J.D."/>
            <person name="Ma L.-J."/>
            <person name="Baker S.E."/>
            <person name="Rep M."/>
            <person name="Adam G."/>
            <person name="Antoniw J."/>
            <person name="Baldwin T."/>
            <person name="Calvo S.E."/>
            <person name="Chang Y.-L."/>
            <person name="DeCaprio D."/>
            <person name="Gale L.R."/>
            <person name="Gnerre S."/>
            <person name="Goswami R.S."/>
            <person name="Hammond-Kosack K."/>
            <person name="Harris L.J."/>
            <person name="Hilburn K."/>
            <person name="Kennell J.C."/>
            <person name="Kroken S."/>
            <person name="Magnuson J.K."/>
            <person name="Mannhaupt G."/>
            <person name="Mauceli E.W."/>
            <person name="Mewes H.-W."/>
            <person name="Mitterbauer R."/>
            <person name="Muehlbauer G."/>
            <person name="Muensterkoetter M."/>
            <person name="Nelson D."/>
            <person name="O'Donnell K."/>
            <person name="Ouellet T."/>
            <person name="Qi W."/>
            <person name="Quesneville H."/>
            <person name="Roncero M.I.G."/>
            <person name="Seong K.-Y."/>
            <person name="Tetko I.V."/>
            <person name="Urban M."/>
            <person name="Waalwijk C."/>
            <person name="Ward T.J."/>
            <person name="Yao J."/>
            <person name="Birren B.W."/>
            <person name="Kistler H.C."/>
        </authorList>
    </citation>
    <scope>NUCLEOTIDE SEQUENCE [LARGE SCALE GENOMIC DNA]</scope>
    <source>
        <strain>ATCC MYA-4620 / CBS 123657 / FGSC 9075 / NRRL 31084 / PH-1</strain>
    </source>
</reference>
<reference key="2">
    <citation type="journal article" date="2010" name="Nature">
        <title>Comparative genomics reveals mobile pathogenicity chromosomes in Fusarium.</title>
        <authorList>
            <person name="Ma L.-J."/>
            <person name="van der Does H.C."/>
            <person name="Borkovich K.A."/>
            <person name="Coleman J.J."/>
            <person name="Daboussi M.-J."/>
            <person name="Di Pietro A."/>
            <person name="Dufresne M."/>
            <person name="Freitag M."/>
            <person name="Grabherr M."/>
            <person name="Henrissat B."/>
            <person name="Houterman P.M."/>
            <person name="Kang S."/>
            <person name="Shim W.-B."/>
            <person name="Woloshuk C."/>
            <person name="Xie X."/>
            <person name="Xu J.-R."/>
            <person name="Antoniw J."/>
            <person name="Baker S.E."/>
            <person name="Bluhm B.H."/>
            <person name="Breakspear A."/>
            <person name="Brown D.W."/>
            <person name="Butchko R.A.E."/>
            <person name="Chapman S."/>
            <person name="Coulson R."/>
            <person name="Coutinho P.M."/>
            <person name="Danchin E.G.J."/>
            <person name="Diener A."/>
            <person name="Gale L.R."/>
            <person name="Gardiner D.M."/>
            <person name="Goff S."/>
            <person name="Hammond-Kosack K.E."/>
            <person name="Hilburn K."/>
            <person name="Hua-Van A."/>
            <person name="Jonkers W."/>
            <person name="Kazan K."/>
            <person name="Kodira C.D."/>
            <person name="Koehrsen M."/>
            <person name="Kumar L."/>
            <person name="Lee Y.-H."/>
            <person name="Li L."/>
            <person name="Manners J.M."/>
            <person name="Miranda-Saavedra D."/>
            <person name="Mukherjee M."/>
            <person name="Park G."/>
            <person name="Park J."/>
            <person name="Park S.-Y."/>
            <person name="Proctor R.H."/>
            <person name="Regev A."/>
            <person name="Ruiz-Roldan M.C."/>
            <person name="Sain D."/>
            <person name="Sakthikumar S."/>
            <person name="Sykes S."/>
            <person name="Schwartz D.C."/>
            <person name="Turgeon B.G."/>
            <person name="Wapinski I."/>
            <person name="Yoder O."/>
            <person name="Young S."/>
            <person name="Zeng Q."/>
            <person name="Zhou S."/>
            <person name="Galagan J."/>
            <person name="Cuomo C.A."/>
            <person name="Kistler H.C."/>
            <person name="Rep M."/>
        </authorList>
    </citation>
    <scope>GENOME REANNOTATION</scope>
    <source>
        <strain>ATCC MYA-4620 / CBS 123657 / FGSC 9075 / NRRL 31084 / PH-1</strain>
    </source>
</reference>
<reference key="3">
    <citation type="journal article" date="2015" name="BMC Genomics">
        <title>The completed genome sequence of the pathogenic ascomycete fungus Fusarium graminearum.</title>
        <authorList>
            <person name="King R."/>
            <person name="Urban M."/>
            <person name="Hammond-Kosack M.C.U."/>
            <person name="Hassani-Pak K."/>
            <person name="Hammond-Kosack K.E."/>
        </authorList>
    </citation>
    <scope>NUCLEOTIDE SEQUENCE [LARGE SCALE GENOMIC DNA]</scope>
    <source>
        <strain>ATCC MYA-4620 / CBS 123657 / FGSC 9075 / NRRL 31084 / PH-1</strain>
    </source>
</reference>
<comment type="function">
    <text evidence="1">Required for 3'-end cleavage and polyadenylation of pre-mRNAs. Also involved in chromosome segregation where it has a role in chromosome attachment to the mitotic spindle (By similarity).</text>
</comment>
<comment type="subcellular location">
    <subcellularLocation>
        <location evidence="1">Nucleus</location>
    </subcellularLocation>
</comment>
<dbReference type="EMBL" id="DS231666">
    <property type="protein sequence ID" value="ESU12813.1"/>
    <property type="molecule type" value="Genomic_DNA"/>
</dbReference>
<dbReference type="EMBL" id="HG970335">
    <property type="protein sequence ID" value="CEF85084.1"/>
    <property type="molecule type" value="Genomic_DNA"/>
</dbReference>
<dbReference type="RefSeq" id="XP_011326320.1">
    <property type="nucleotide sequence ID" value="XM_011328018.1"/>
</dbReference>
<dbReference type="SMR" id="Q4I7X1"/>
<dbReference type="FunCoup" id="Q4I7X1">
    <property type="interactions" value="233"/>
</dbReference>
<dbReference type="STRING" id="229533.Q4I7X1"/>
<dbReference type="GeneID" id="23553809"/>
<dbReference type="KEGG" id="fgr:FGSG_06687"/>
<dbReference type="VEuPathDB" id="FungiDB:FGRAMPH1_01G22917"/>
<dbReference type="eggNOG" id="KOG0284">
    <property type="taxonomic scope" value="Eukaryota"/>
</dbReference>
<dbReference type="HOGENOM" id="CLU_000288_77_1_1"/>
<dbReference type="InParanoid" id="Q4I7X1"/>
<dbReference type="OrthoDB" id="115400at110618"/>
<dbReference type="Proteomes" id="UP000070720">
    <property type="component" value="Chromosome 4"/>
</dbReference>
<dbReference type="GO" id="GO:0005847">
    <property type="term" value="C:mRNA cleavage and polyadenylation specificity factor complex"/>
    <property type="evidence" value="ECO:0007669"/>
    <property type="project" value="TreeGrafter"/>
</dbReference>
<dbReference type="GO" id="GO:0007059">
    <property type="term" value="P:chromosome segregation"/>
    <property type="evidence" value="ECO:0007669"/>
    <property type="project" value="UniProtKB-KW"/>
</dbReference>
<dbReference type="GO" id="GO:0031124">
    <property type="term" value="P:mRNA 3'-end processing"/>
    <property type="evidence" value="ECO:0007669"/>
    <property type="project" value="InterPro"/>
</dbReference>
<dbReference type="CDD" id="cd00200">
    <property type="entry name" value="WD40"/>
    <property type="match status" value="1"/>
</dbReference>
<dbReference type="FunFam" id="2.130.10.10:FF:001039">
    <property type="entry name" value="Polyadenylation factor subunit 2"/>
    <property type="match status" value="1"/>
</dbReference>
<dbReference type="FunFam" id="2.130.10.10:FF:002008">
    <property type="entry name" value="Polyadenylation factor subunit 2"/>
    <property type="match status" value="1"/>
</dbReference>
<dbReference type="Gene3D" id="2.130.10.10">
    <property type="entry name" value="YVTN repeat-like/Quinoprotein amine dehydrogenase"/>
    <property type="match status" value="2"/>
</dbReference>
<dbReference type="InterPro" id="IPR045245">
    <property type="entry name" value="Pfs2-like"/>
</dbReference>
<dbReference type="InterPro" id="IPR015943">
    <property type="entry name" value="WD40/YVTN_repeat-like_dom_sf"/>
</dbReference>
<dbReference type="InterPro" id="IPR036322">
    <property type="entry name" value="WD40_repeat_dom_sf"/>
</dbReference>
<dbReference type="InterPro" id="IPR001680">
    <property type="entry name" value="WD40_rpt"/>
</dbReference>
<dbReference type="PANTHER" id="PTHR22836:SF0">
    <property type="entry name" value="PRE-MRNA 3' END PROCESSING PROTEIN WDR33"/>
    <property type="match status" value="1"/>
</dbReference>
<dbReference type="PANTHER" id="PTHR22836">
    <property type="entry name" value="WD40 REPEAT PROTEIN"/>
    <property type="match status" value="1"/>
</dbReference>
<dbReference type="Pfam" id="PF00400">
    <property type="entry name" value="WD40"/>
    <property type="match status" value="6"/>
</dbReference>
<dbReference type="SMART" id="SM00320">
    <property type="entry name" value="WD40"/>
    <property type="match status" value="7"/>
</dbReference>
<dbReference type="SUPFAM" id="SSF50978">
    <property type="entry name" value="WD40 repeat-like"/>
    <property type="match status" value="1"/>
</dbReference>
<dbReference type="PROSITE" id="PS50082">
    <property type="entry name" value="WD_REPEATS_2"/>
    <property type="match status" value="5"/>
</dbReference>
<dbReference type="PROSITE" id="PS50294">
    <property type="entry name" value="WD_REPEATS_REGION"/>
    <property type="match status" value="1"/>
</dbReference>
<keyword id="KW-0159">Chromosome partition</keyword>
<keyword id="KW-0507">mRNA processing</keyword>
<keyword id="KW-0539">Nucleus</keyword>
<keyword id="KW-1185">Reference proteome</keyword>
<keyword id="KW-0677">Repeat</keyword>
<keyword id="KW-0853">WD repeat</keyword>
<evidence type="ECO:0000250" key="1"/>
<evidence type="ECO:0000256" key="2">
    <source>
        <dbReference type="SAM" id="MobiDB-lite"/>
    </source>
</evidence>
<proteinExistence type="inferred from homology"/>
<organism>
    <name type="scientific">Gibberella zeae (strain ATCC MYA-4620 / CBS 123657 / FGSC 9075 / NRRL 31084 / PH-1)</name>
    <name type="common">Wheat head blight fungus</name>
    <name type="synonym">Fusarium graminearum</name>
    <dbReference type="NCBI Taxonomy" id="229533"/>
    <lineage>
        <taxon>Eukaryota</taxon>
        <taxon>Fungi</taxon>
        <taxon>Dikarya</taxon>
        <taxon>Ascomycota</taxon>
        <taxon>Pezizomycotina</taxon>
        <taxon>Sordariomycetes</taxon>
        <taxon>Hypocreomycetidae</taxon>
        <taxon>Hypocreales</taxon>
        <taxon>Nectriaceae</taxon>
        <taxon>Fusarium</taxon>
    </lineage>
</organism>
<sequence>MAYEPRGDHGGGGGGQGQDGAFVKVRGRRPVTDYGATITHWQHDRAPGYKGGYTGEAERPSASYIVDMLPPAARVTKAADSIPIKHLHSSLNKIKHPINVVRWTPEGRRLLTASTSGEFTLWNGTGFNFETIMQAHDSAIRALEYSHSDDWLISADHDGAVKYWQPNFNNVQSINAHTDPIRDLAFSPSDSKFVTASDDSTLKIFDFALGQMESKLEGHGWDAKSVDWHPTKGLLVSGSKDHLVKLWDPRTSRCLTTLHGHKSTITKVLFEKVRGACLATSARDQTARVFDLRMMRDICLLKGHEKDISTLTWHPVHPNLLSTGGMDGSLFHYLLDSPNPPPGQSFTVAPYDSPDPTTVPAQSVWPTHKVPYAHDYAIWSLDWHPLGHILASGSNDRITRFWSRARPGDAEVFQDRYHIGEAAAEAQGTWDRRGGRRQRQEEEQQEMEDEMDALVDQDAPKAGVPGLPGIPGLPLGGLPGLGSAVPPPPIPGVGAGGPPPPLPFPLPGLNGSLPPPPLPGLDPNNPPDPAQLLELMKKAGVPLPPPGALPPGLLPPGGIPPPPGGFGMPIPPPPMSALEAEKAENVRRRAPLPSQEDSLRHEQRQGKYTRAR</sequence>
<accession>Q4I7X1</accession>
<accession>A0A0E0SF71</accession>
<accession>V6RDX2</accession>
<name>PFS2_GIBZE</name>
<gene>
    <name type="primary">PFS2</name>
    <name type="ORF">FGRRES_06687</name>
    <name type="ORF">FGSG_06687</name>
</gene>